<accession>Q5ZJV4</accession>
<accession>E1BXG4</accession>
<feature type="chain" id="PRO_0000089826" description="Mini-chromosome maintenance complex-binding protein">
    <location>
        <begin position="1"/>
        <end position="633"/>
    </location>
</feature>
<feature type="region of interest" description="Disordered" evidence="2">
    <location>
        <begin position="154"/>
        <end position="198"/>
    </location>
</feature>
<feature type="compositionally biased region" description="Basic and acidic residues" evidence="2">
    <location>
        <begin position="174"/>
        <end position="184"/>
    </location>
</feature>
<feature type="sequence conflict" description="In Ref. 1; CAG31989." evidence="3" ref="1">
    <original>YLFSL</original>
    <variation>AYISAS</variation>
    <location>
        <begin position="144"/>
        <end position="148"/>
    </location>
</feature>
<feature type="sequence conflict" description="In Ref. 1; CAG31989." evidence="3" ref="1">
    <original>M</original>
    <variation>T</variation>
    <location>
        <position position="274"/>
    </location>
</feature>
<name>MCMBP_CHICK</name>
<sequence length="633" mass="71924">MPCVADWLNNPFSIVQGIFAQNTPNSDWEKKVTDYFKEKLKENNATNWVPSLNDVPVHYLKPNSLVKFRCMVQDMFDPEFYMGVYETVDPNTNARVLHFGKYRDVAECGPQQEIDMNSSQTVTLERQTFYCVPVPGESAWVKEYLFSLQARVSPSTSYTPSRHKRSYEEDEDMEQHPSKQKEQHMGSGGDSHGCGEPKRLETEASAGHHLISPNCSPPLDLNFPLPGEKGPACLVKVYESWDTFKVNDVLEVYGILSVDPVLSIVNSEERDSSMLDPMECMDTAEEQRVHSPPSSLVPRIHVILAHKLQHLNPLLPACLNEEESKTFVSNFMSELSPVRAELLGFLTHALLGDSLAAEYLILHLISTVYARRDVLPLGKFTVNLSGCPRNSIFTEHIYRIIQQLVPASYRLQMTIENMNHSRFIPRKDYTANRLVSGILQLASNTSLVIDETQLEQGQLDTKGVHNVKALGNLITWQKVDYDFSYHQMEFPCNINVLITSEGRSLLPSDCQVQLQPQIIPPNMEEYMNSLLTAVLPSVLNKFRIYLSLLRLLDYSISDEVTKAVEEDFVEMRKNDPESITADDLHRTLLVARFLSLSAGQTTLSRERWLRAKQLEALRKARLQQQKCVNGNEL</sequence>
<evidence type="ECO:0000250" key="1"/>
<evidence type="ECO:0000256" key="2">
    <source>
        <dbReference type="SAM" id="MobiDB-lite"/>
    </source>
</evidence>
<evidence type="ECO:0000305" key="3"/>
<keyword id="KW-0131">Cell cycle</keyword>
<keyword id="KW-0132">Cell division</keyword>
<keyword id="KW-0235">DNA replication</keyword>
<keyword id="KW-0498">Mitosis</keyword>
<keyword id="KW-0539">Nucleus</keyword>
<keyword id="KW-1185">Reference proteome</keyword>
<proteinExistence type="evidence at transcript level"/>
<organism>
    <name type="scientific">Gallus gallus</name>
    <name type="common">Chicken</name>
    <dbReference type="NCBI Taxonomy" id="9031"/>
    <lineage>
        <taxon>Eukaryota</taxon>
        <taxon>Metazoa</taxon>
        <taxon>Chordata</taxon>
        <taxon>Craniata</taxon>
        <taxon>Vertebrata</taxon>
        <taxon>Euteleostomi</taxon>
        <taxon>Archelosauria</taxon>
        <taxon>Archosauria</taxon>
        <taxon>Dinosauria</taxon>
        <taxon>Saurischia</taxon>
        <taxon>Theropoda</taxon>
        <taxon>Coelurosauria</taxon>
        <taxon>Aves</taxon>
        <taxon>Neognathae</taxon>
        <taxon>Galloanserae</taxon>
        <taxon>Galliformes</taxon>
        <taxon>Phasianidae</taxon>
        <taxon>Phasianinae</taxon>
        <taxon>Gallus</taxon>
    </lineage>
</organism>
<gene>
    <name type="primary">MCMBP</name>
    <name type="ORF">RCJMB04_15g11</name>
</gene>
<reference key="1">
    <citation type="journal article" date="2005" name="Genome Biol.">
        <title>Full-length cDNAs from chicken bursal lymphocytes to facilitate gene function analysis.</title>
        <authorList>
            <person name="Caldwell R.B."/>
            <person name="Kierzek A.M."/>
            <person name="Arakawa H."/>
            <person name="Bezzubov Y."/>
            <person name="Zaim J."/>
            <person name="Fiedler P."/>
            <person name="Kutter S."/>
            <person name="Blagodatski A."/>
            <person name="Kostovska D."/>
            <person name="Koter M."/>
            <person name="Plachy J."/>
            <person name="Carninci P."/>
            <person name="Hayashizaki Y."/>
            <person name="Buerstedde J.-M."/>
        </authorList>
    </citation>
    <scope>NUCLEOTIDE SEQUENCE [LARGE SCALE MRNA]</scope>
    <source>
        <strain>CB</strain>
        <tissue>Bursa of Fabricius</tissue>
    </source>
</reference>
<reference key="2">
    <citation type="journal article" date="2004" name="Nature">
        <title>Sequence and comparative analysis of the chicken genome provide unique perspectives on vertebrate evolution.</title>
        <authorList>
            <person name="Hillier L.W."/>
            <person name="Miller W."/>
            <person name="Birney E."/>
            <person name="Warren W."/>
            <person name="Hardison R.C."/>
            <person name="Ponting C.P."/>
            <person name="Bork P."/>
            <person name="Burt D.W."/>
            <person name="Groenen M.A.M."/>
            <person name="Delany M.E."/>
            <person name="Dodgson J.B."/>
            <person name="Chinwalla A.T."/>
            <person name="Cliften P.F."/>
            <person name="Clifton S.W."/>
            <person name="Delehaunty K.D."/>
            <person name="Fronick C."/>
            <person name="Fulton R.S."/>
            <person name="Graves T.A."/>
            <person name="Kremitzki C."/>
            <person name="Layman D."/>
            <person name="Magrini V."/>
            <person name="McPherson J.D."/>
            <person name="Miner T.L."/>
            <person name="Minx P."/>
            <person name="Nash W.E."/>
            <person name="Nhan M.N."/>
            <person name="Nelson J.O."/>
            <person name="Oddy L.G."/>
            <person name="Pohl C.S."/>
            <person name="Randall-Maher J."/>
            <person name="Smith S.M."/>
            <person name="Wallis J.W."/>
            <person name="Yang S.-P."/>
            <person name="Romanov M.N."/>
            <person name="Rondelli C.M."/>
            <person name="Paton B."/>
            <person name="Smith J."/>
            <person name="Morrice D."/>
            <person name="Daniels L."/>
            <person name="Tempest H.G."/>
            <person name="Robertson L."/>
            <person name="Masabanda J.S."/>
            <person name="Griffin D.K."/>
            <person name="Vignal A."/>
            <person name="Fillon V."/>
            <person name="Jacobbson L."/>
            <person name="Kerje S."/>
            <person name="Andersson L."/>
            <person name="Crooijmans R.P."/>
            <person name="Aerts J."/>
            <person name="van der Poel J.J."/>
            <person name="Ellegren H."/>
            <person name="Caldwell R.B."/>
            <person name="Hubbard S.J."/>
            <person name="Grafham D.V."/>
            <person name="Kierzek A.M."/>
            <person name="McLaren S.R."/>
            <person name="Overton I.M."/>
            <person name="Arakawa H."/>
            <person name="Beattie K.J."/>
            <person name="Bezzubov Y."/>
            <person name="Boardman P.E."/>
            <person name="Bonfield J.K."/>
            <person name="Croning M.D.R."/>
            <person name="Davies R.M."/>
            <person name="Francis M.D."/>
            <person name="Humphray S.J."/>
            <person name="Scott C.E."/>
            <person name="Taylor R.G."/>
            <person name="Tickle C."/>
            <person name="Brown W.R.A."/>
            <person name="Rogers J."/>
            <person name="Buerstedde J.-M."/>
            <person name="Wilson S.A."/>
            <person name="Stubbs L."/>
            <person name="Ovcharenko I."/>
            <person name="Gordon L."/>
            <person name="Lucas S."/>
            <person name="Miller M.M."/>
            <person name="Inoko H."/>
            <person name="Shiina T."/>
            <person name="Kaufman J."/>
            <person name="Salomonsen J."/>
            <person name="Skjoedt K."/>
            <person name="Wong G.K.-S."/>
            <person name="Wang J."/>
            <person name="Liu B."/>
            <person name="Wang J."/>
            <person name="Yu J."/>
            <person name="Yang H."/>
            <person name="Nefedov M."/>
            <person name="Koriabine M."/>
            <person name="Dejong P.J."/>
            <person name="Goodstadt L."/>
            <person name="Webber C."/>
            <person name="Dickens N.J."/>
            <person name="Letunic I."/>
            <person name="Suyama M."/>
            <person name="Torrents D."/>
            <person name="von Mering C."/>
            <person name="Zdobnov E.M."/>
            <person name="Makova K."/>
            <person name="Nekrutenko A."/>
            <person name="Elnitski L."/>
            <person name="Eswara P."/>
            <person name="King D.C."/>
            <person name="Yang S.-P."/>
            <person name="Tyekucheva S."/>
            <person name="Radakrishnan A."/>
            <person name="Harris R.S."/>
            <person name="Chiaromonte F."/>
            <person name="Taylor J."/>
            <person name="He J."/>
            <person name="Rijnkels M."/>
            <person name="Griffiths-Jones S."/>
            <person name="Ureta-Vidal A."/>
            <person name="Hoffman M.M."/>
            <person name="Severin J."/>
            <person name="Searle S.M.J."/>
            <person name="Law A.S."/>
            <person name="Speed D."/>
            <person name="Waddington D."/>
            <person name="Cheng Z."/>
            <person name="Tuzun E."/>
            <person name="Eichler E."/>
            <person name="Bao Z."/>
            <person name="Flicek P."/>
            <person name="Shteynberg D.D."/>
            <person name="Brent M.R."/>
            <person name="Bye J.M."/>
            <person name="Huckle E.J."/>
            <person name="Chatterji S."/>
            <person name="Dewey C."/>
            <person name="Pachter L."/>
            <person name="Kouranov A."/>
            <person name="Mourelatos Z."/>
            <person name="Hatzigeorgiou A.G."/>
            <person name="Paterson A.H."/>
            <person name="Ivarie R."/>
            <person name="Brandstrom M."/>
            <person name="Axelsson E."/>
            <person name="Backstrom N."/>
            <person name="Berlin S."/>
            <person name="Webster M.T."/>
            <person name="Pourquie O."/>
            <person name="Reymond A."/>
            <person name="Ucla C."/>
            <person name="Antonarakis S.E."/>
            <person name="Long M."/>
            <person name="Emerson J.J."/>
            <person name="Betran E."/>
            <person name="Dupanloup I."/>
            <person name="Kaessmann H."/>
            <person name="Hinrichs A.S."/>
            <person name="Bejerano G."/>
            <person name="Furey T.S."/>
            <person name="Harte R.A."/>
            <person name="Raney B."/>
            <person name="Siepel A."/>
            <person name="Kent W.J."/>
            <person name="Haussler D."/>
            <person name="Eyras E."/>
            <person name="Castelo R."/>
            <person name="Abril J.F."/>
            <person name="Castellano S."/>
            <person name="Camara F."/>
            <person name="Parra G."/>
            <person name="Guigo R."/>
            <person name="Bourque G."/>
            <person name="Tesler G."/>
            <person name="Pevzner P.A."/>
            <person name="Smit A."/>
            <person name="Fulton L.A."/>
            <person name="Mardis E.R."/>
            <person name="Wilson R.K."/>
        </authorList>
    </citation>
    <scope>NUCLEOTIDE SEQUENCE [LARGE SCALE GENOMIC DNA]</scope>
</reference>
<comment type="function">
    <text evidence="1">Associated component of the MCM complex that acts as a regulator of DNA replication. Binds to the MCM complex during late S phase and promotes the disassembly of the MCM complex from chromatin, thereby acting as a key regulator of pre-replication complex (pre-RC) unloading from replicated DNA. Can dissociate the MCM complex without addition of ATP; probably acts by destabilizing interactions of each individual subunits of the MCM complex. Required for sister chromatid cohesion (By similarity).</text>
</comment>
<comment type="subunit">
    <text evidence="1">Interacts with the MCM complex: associates with the MCM3-7 complex which lacks MCM2, while it does not interact with the MCM complex when MCM2 is present (MCM2-7 complex).</text>
</comment>
<comment type="subcellular location">
    <subcellularLocation>
        <location evidence="1">Nucleus</location>
    </subcellularLocation>
    <text evidence="1">Associates with chromatin.</text>
</comment>
<comment type="similarity">
    <text evidence="3">Belongs to the MCMBP family.</text>
</comment>
<protein>
    <recommendedName>
        <fullName>Mini-chromosome maintenance complex-binding protein</fullName>
        <shortName>MCM-BP</shortName>
        <shortName>MCM-binding protein</shortName>
    </recommendedName>
</protein>
<dbReference type="EMBL" id="AJ720330">
    <property type="protein sequence ID" value="CAG31989.1"/>
    <property type="molecule type" value="mRNA"/>
</dbReference>
<dbReference type="EMBL" id="AADN02030984">
    <property type="status" value="NOT_ANNOTATED_CDS"/>
    <property type="molecule type" value="Genomic_DNA"/>
</dbReference>
<dbReference type="RefSeq" id="NP_001012930.1">
    <property type="nucleotide sequence ID" value="NM_001012912.1"/>
</dbReference>
<dbReference type="FunCoup" id="Q5ZJV4">
    <property type="interactions" value="2306"/>
</dbReference>
<dbReference type="STRING" id="9031.ENSGALP00000037974"/>
<dbReference type="PaxDb" id="9031-ENSGALP00000037974"/>
<dbReference type="GeneID" id="423933"/>
<dbReference type="KEGG" id="gga:423933"/>
<dbReference type="CTD" id="79892"/>
<dbReference type="VEuPathDB" id="HostDB:geneid_423933"/>
<dbReference type="eggNOG" id="KOG2545">
    <property type="taxonomic scope" value="Eukaryota"/>
</dbReference>
<dbReference type="InParanoid" id="Q5ZJV4"/>
<dbReference type="OrthoDB" id="329666at2759"/>
<dbReference type="PhylomeDB" id="Q5ZJV4"/>
<dbReference type="PRO" id="PR:Q5ZJV4"/>
<dbReference type="Proteomes" id="UP000000539">
    <property type="component" value="Unassembled WGS sequence"/>
</dbReference>
<dbReference type="GO" id="GO:0005634">
    <property type="term" value="C:nucleus"/>
    <property type="evidence" value="ECO:0000250"/>
    <property type="project" value="UniProtKB"/>
</dbReference>
<dbReference type="GO" id="GO:0003682">
    <property type="term" value="F:chromatin binding"/>
    <property type="evidence" value="ECO:0000250"/>
    <property type="project" value="UniProtKB"/>
</dbReference>
<dbReference type="GO" id="GO:0051301">
    <property type="term" value="P:cell division"/>
    <property type="evidence" value="ECO:0007669"/>
    <property type="project" value="UniProtKB-KW"/>
</dbReference>
<dbReference type="GO" id="GO:0006261">
    <property type="term" value="P:DNA-templated DNA replication"/>
    <property type="evidence" value="ECO:0000250"/>
    <property type="project" value="UniProtKB"/>
</dbReference>
<dbReference type="GO" id="GO:0007062">
    <property type="term" value="P:sister chromatid cohesion"/>
    <property type="evidence" value="ECO:0000250"/>
    <property type="project" value="UniProtKB"/>
</dbReference>
<dbReference type="InterPro" id="IPR019140">
    <property type="entry name" value="MCM_complex-bd"/>
</dbReference>
<dbReference type="PANTHER" id="PTHR13489">
    <property type="entry name" value="MINI-CHROMOSOME MAINTENANCE COMPLEX-BINDING PROTEIN"/>
    <property type="match status" value="1"/>
</dbReference>
<dbReference type="PANTHER" id="PTHR13489:SF0">
    <property type="entry name" value="MINI-CHROMOSOME MAINTENANCE COMPLEX-BINDING PROTEIN"/>
    <property type="match status" value="1"/>
</dbReference>
<dbReference type="Pfam" id="PF09739">
    <property type="entry name" value="MCM_bind"/>
    <property type="match status" value="1"/>
</dbReference>